<accession>D0UZK2</accession>
<accession>A0A067E424</accession>
<accession>Q71MJ3</accession>
<comment type="function">
    <text evidence="3 4">Sesquiterpene synthase involved in the biosynthesis of volatile compounds which contribute to fruit flavor and aroma (PubMed:14617067, PubMed:21818683). Mediates the conversion of (2E,6E)-farnesyl diphosphate (FPP) into (+)-valencene (PubMed:14617067, PubMed:21818683). No activity detected with geranyl diphosphate (GPP) (PubMed:14617067).</text>
</comment>
<comment type="catalytic activity">
    <reaction evidence="3 4">
        <text>(2E,6E)-farnesyl diphosphate = (+)-valencene + diphosphate</text>
        <dbReference type="Rhea" id="RHEA:29511"/>
        <dbReference type="ChEBI" id="CHEBI:33019"/>
        <dbReference type="ChEBI" id="CHEBI:61700"/>
        <dbReference type="ChEBI" id="CHEBI:175763"/>
        <dbReference type="EC" id="4.2.3.73"/>
    </reaction>
    <physiologicalReaction direction="left-to-right" evidence="3 4">
        <dbReference type="Rhea" id="RHEA:29512"/>
    </physiologicalReaction>
</comment>
<comment type="cofactor">
    <cofactor evidence="1">
        <name>Mg(2+)</name>
        <dbReference type="ChEBI" id="CHEBI:18420"/>
    </cofactor>
    <cofactor evidence="1">
        <name>Mn(2+)</name>
        <dbReference type="ChEBI" id="CHEBI:29035"/>
    </cofactor>
    <text evidence="1">Binds 3 Mg(2+) or Mn(2+) ions per subunit.</text>
</comment>
<comment type="pathway">
    <text evidence="3">Secondary metabolite biosynthesis; terpenoid biosynthesis.</text>
</comment>
<comment type="developmental stage">
    <text evidence="3">Accumulates during fruit maturation and ripening.</text>
</comment>
<comment type="induction">
    <text evidence="3">Induced by ethylene.</text>
</comment>
<comment type="domain">
    <text evidence="2">The Asp-Asp-Xaa-Xaa-Asp/Glu (DDXXD/E) motif is important for the catalytic activity, presumably through binding to Mg(2+).</text>
</comment>
<comment type="similarity">
    <text evidence="9">Belongs to the terpene synthase family. Tpsa subfamily.</text>
</comment>
<comment type="sequence caution" evidence="9">
    <conflict type="erroneous gene model prediction">
        <sequence resource="EMBL-CDS" id="KDO49808"/>
    </conflict>
</comment>
<dbReference type="EC" id="4.2.3.73" evidence="3 4"/>
<dbReference type="EMBL" id="AF441124">
    <property type="protein sequence ID" value="AAQ04608.1"/>
    <property type="molecule type" value="mRNA"/>
</dbReference>
<dbReference type="EMBL" id="GQ988384">
    <property type="protein sequence ID" value="ACX70155.1"/>
    <property type="molecule type" value="mRNA"/>
</dbReference>
<dbReference type="EMBL" id="KK785100">
    <property type="protein sequence ID" value="KDO49808.1"/>
    <property type="status" value="ALT_SEQ"/>
    <property type="molecule type" value="Genomic_DNA"/>
</dbReference>
<dbReference type="RefSeq" id="NP_001275785.1">
    <property type="nucleotide sequence ID" value="NM_001288856.1"/>
</dbReference>
<dbReference type="SMR" id="D0UZK2"/>
<dbReference type="STRING" id="2711.A0A067E424"/>
<dbReference type="PaxDb" id="2711-XP_006477783.1"/>
<dbReference type="GeneID" id="102577959"/>
<dbReference type="KEGG" id="cit:102577959"/>
<dbReference type="eggNOG" id="ENOG502QUCN">
    <property type="taxonomic scope" value="Eukaryota"/>
</dbReference>
<dbReference type="OrthoDB" id="304599at71240"/>
<dbReference type="BRENDA" id="4.2.3.128">
    <property type="organism ID" value="1426"/>
</dbReference>
<dbReference type="BRENDA" id="4.2.3.133">
    <property type="organism ID" value="1426"/>
</dbReference>
<dbReference type="BRENDA" id="4.2.3.73">
    <property type="organism ID" value="1426"/>
</dbReference>
<dbReference type="UniPathway" id="UPA00213"/>
<dbReference type="Proteomes" id="UP000027120">
    <property type="component" value="Unassembled WGS sequence"/>
</dbReference>
<dbReference type="GO" id="GO:0000287">
    <property type="term" value="F:magnesium ion binding"/>
    <property type="evidence" value="ECO:0007669"/>
    <property type="project" value="InterPro"/>
</dbReference>
<dbReference type="GO" id="GO:0010333">
    <property type="term" value="F:terpene synthase activity"/>
    <property type="evidence" value="ECO:0007669"/>
    <property type="project" value="InterPro"/>
</dbReference>
<dbReference type="GO" id="GO:0102905">
    <property type="term" value="F:valencene synthase activity"/>
    <property type="evidence" value="ECO:0000314"/>
    <property type="project" value="UniProtKB"/>
</dbReference>
<dbReference type="GO" id="GO:0016102">
    <property type="term" value="P:diterpenoid biosynthetic process"/>
    <property type="evidence" value="ECO:0007669"/>
    <property type="project" value="InterPro"/>
</dbReference>
<dbReference type="GO" id="GO:0009835">
    <property type="term" value="P:fruit ripening"/>
    <property type="evidence" value="ECO:0000270"/>
    <property type="project" value="UniProtKB"/>
</dbReference>
<dbReference type="GO" id="GO:0009723">
    <property type="term" value="P:response to ethylene"/>
    <property type="evidence" value="ECO:0000270"/>
    <property type="project" value="UniProtKB"/>
</dbReference>
<dbReference type="CDD" id="cd00684">
    <property type="entry name" value="Terpene_cyclase_plant_C1"/>
    <property type="match status" value="1"/>
</dbReference>
<dbReference type="FunFam" id="1.10.600.10:FF:000007">
    <property type="entry name" value="Isoprene synthase, chloroplastic"/>
    <property type="match status" value="1"/>
</dbReference>
<dbReference type="FunFam" id="1.50.10.130:FF:000001">
    <property type="entry name" value="Isoprene synthase, chloroplastic"/>
    <property type="match status" value="1"/>
</dbReference>
<dbReference type="Gene3D" id="1.10.600.10">
    <property type="entry name" value="Farnesyl Diphosphate Synthase"/>
    <property type="match status" value="1"/>
</dbReference>
<dbReference type="Gene3D" id="1.50.10.130">
    <property type="entry name" value="Terpene synthase, N-terminal domain"/>
    <property type="match status" value="1"/>
</dbReference>
<dbReference type="InterPro" id="IPR008949">
    <property type="entry name" value="Isoprenoid_synthase_dom_sf"/>
</dbReference>
<dbReference type="InterPro" id="IPR034741">
    <property type="entry name" value="Terpene_cyclase-like_1_C"/>
</dbReference>
<dbReference type="InterPro" id="IPR044814">
    <property type="entry name" value="Terpene_cyclase_plant_C1"/>
</dbReference>
<dbReference type="InterPro" id="IPR001906">
    <property type="entry name" value="Terpene_synth_N"/>
</dbReference>
<dbReference type="InterPro" id="IPR036965">
    <property type="entry name" value="Terpene_synth_N_sf"/>
</dbReference>
<dbReference type="InterPro" id="IPR050148">
    <property type="entry name" value="Terpene_synthase-like"/>
</dbReference>
<dbReference type="InterPro" id="IPR005630">
    <property type="entry name" value="Terpene_synthase_metal-bd"/>
</dbReference>
<dbReference type="InterPro" id="IPR008930">
    <property type="entry name" value="Terpenoid_cyclase/PrenylTrfase"/>
</dbReference>
<dbReference type="PANTHER" id="PTHR31225:SF205">
    <property type="entry name" value="(-)-GERMACRENE D SYNTHASE-LIKE"/>
    <property type="match status" value="1"/>
</dbReference>
<dbReference type="PANTHER" id="PTHR31225">
    <property type="entry name" value="OS04G0344100 PROTEIN-RELATED"/>
    <property type="match status" value="1"/>
</dbReference>
<dbReference type="Pfam" id="PF01397">
    <property type="entry name" value="Terpene_synth"/>
    <property type="match status" value="1"/>
</dbReference>
<dbReference type="Pfam" id="PF03936">
    <property type="entry name" value="Terpene_synth_C"/>
    <property type="match status" value="1"/>
</dbReference>
<dbReference type="SFLD" id="SFLDS00005">
    <property type="entry name" value="Isoprenoid_Synthase_Type_I"/>
    <property type="match status" value="1"/>
</dbReference>
<dbReference type="SFLD" id="SFLDG01019">
    <property type="entry name" value="Terpene_Cyclase_Like_1_C_Termi"/>
    <property type="match status" value="1"/>
</dbReference>
<dbReference type="SUPFAM" id="SSF48239">
    <property type="entry name" value="Terpenoid cyclases/Protein prenyltransferases"/>
    <property type="match status" value="1"/>
</dbReference>
<dbReference type="SUPFAM" id="SSF48576">
    <property type="entry name" value="Terpenoid synthases"/>
    <property type="match status" value="1"/>
</dbReference>
<name>TPS1_CITSI</name>
<reference key="1">
    <citation type="journal article" date="2003" name="Plant J.">
        <title>Citrus fruit flavor and aroma biosynthesis: isolation, functional characterization, and developmental regulation of Cstps1, a key gene in the production of the sesquiterpene aroma compound valencene.</title>
        <authorList>
            <person name="Sharon-Asa L."/>
            <person name="Shalit M."/>
            <person name="Frydman A."/>
            <person name="Bar E."/>
            <person name="Holland D."/>
            <person name="Or E."/>
            <person name="Lavi U."/>
            <person name="Lewinsohn E."/>
            <person name="Eyal Y."/>
        </authorList>
    </citation>
    <scope>NUCLEOTIDE SEQUENCE [MRNA]</scope>
    <scope>FUNCTION</scope>
    <scope>CATALYTIC ACTIVITY</scope>
    <scope>PATHWAY</scope>
    <scope>DEVELOPMENTAL STAGE</scope>
    <scope>INDUCTION BY ETHYLENE</scope>
    <source>
        <strain>cv. Valencia</strain>
    </source>
</reference>
<reference key="2">
    <citation type="submission" date="2009-09" db="EMBL/GenBank/DDBJ databases">
        <title>Isolation of the genes-encoding 1,2 rhamnosyltransferase and valencene synthase from Citrus grandis and C. sinensis.</title>
        <authorList>
            <person name="Liu C.H."/>
            <person name="Deng X.X."/>
            <person name="Ye J.L."/>
            <person name="Xu J."/>
        </authorList>
    </citation>
    <scope>NUCLEOTIDE SEQUENCE [MRNA]</scope>
</reference>
<reference key="3">
    <citation type="submission" date="2014-04" db="EMBL/GenBank/DDBJ databases">
        <authorList>
            <consortium name="International Citrus Genome Consortium"/>
            <person name="Gmitter F."/>
            <person name="Chen C."/>
            <person name="Farmerie W."/>
            <person name="Harkins T."/>
            <person name="Desany B."/>
            <person name="Mohiuddin M."/>
            <person name="Kodira C."/>
            <person name="Borodovsky M."/>
            <person name="Lomsadze A."/>
            <person name="Burns P."/>
            <person name="Jenkins J."/>
            <person name="Prochnik S."/>
            <person name="Shu S."/>
            <person name="Chapman J."/>
            <person name="Pitluck S."/>
            <person name="Schmutz J."/>
            <person name="Rokhsar D."/>
        </authorList>
    </citation>
    <scope>NUCLEOTIDE SEQUENCE [LARGE SCALE GENOMIC DNA]</scope>
    <source>
        <strain>cv. Ridge Pineapple sweet orange</strain>
    </source>
</reference>
<reference key="4">
    <citation type="journal article" date="2011" name="Plant Mol. Biol.">
        <title>RNA-seq discovery, functional characterization, and comparison of sesquiterpene synthases from Solanum lycopersicum and Solanum habrochaites trichomes.</title>
        <authorList>
            <person name="Bleeker P.M."/>
            <person name="Spyropoulou E.A."/>
            <person name="Diergaarde P.J."/>
            <person name="Volpin H."/>
            <person name="De Both M.T.J."/>
            <person name="Zerbe P."/>
            <person name="Bohlmann J."/>
            <person name="Falara V."/>
            <person name="Matsuba Y."/>
            <person name="Pichersky E."/>
            <person name="Haring M.A."/>
            <person name="Schuurink R.C."/>
        </authorList>
    </citation>
    <scope>FUNCTION</scope>
    <scope>CATALYTIC ACTIVITY</scope>
    <scope>PATHWAY</scope>
    <scope>GENE FAMILY</scope>
</reference>
<reference key="5">
    <citation type="journal article" date="2012" name="Curr. Pharm. Biotechnol.">
        <title>Tangy scent in Toona sinensis (Meliaceae) leaflets: isolation, functional characterization, and regulation of TsTPS1 and TsTPS2, two key terpene synthase genes in the biosynthesis of the scent compound.</title>
        <authorList>
            <person name="Hsu C.-Y."/>
            <person name="Huang P.-L."/>
            <person name="Chen C.-M."/>
            <person name="Mao C.-T."/>
            <person name="Chaw S.-M."/>
        </authorList>
    </citation>
    <scope>GENE FAMILY</scope>
</reference>
<keyword id="KW-0456">Lyase</keyword>
<keyword id="KW-0460">Magnesium</keyword>
<keyword id="KW-0479">Metal-binding</keyword>
<keyword id="KW-1185">Reference proteome</keyword>
<evidence type="ECO:0000250" key="1">
    <source>
        <dbReference type="UniProtKB" id="A0A1C9J6A7"/>
    </source>
</evidence>
<evidence type="ECO:0000250" key="2">
    <source>
        <dbReference type="UniProtKB" id="Q40577"/>
    </source>
</evidence>
<evidence type="ECO:0000269" key="3">
    <source>
    </source>
</evidence>
<evidence type="ECO:0000269" key="4">
    <source>
    </source>
</evidence>
<evidence type="ECO:0000303" key="5">
    <source>
    </source>
</evidence>
<evidence type="ECO:0000303" key="6">
    <source>
    </source>
</evidence>
<evidence type="ECO:0000303" key="7">
    <source>
    </source>
</evidence>
<evidence type="ECO:0000303" key="8">
    <source ref="2"/>
</evidence>
<evidence type="ECO:0000305" key="9"/>
<evidence type="ECO:0000312" key="10">
    <source>
        <dbReference type="EMBL" id="KDO49808.1"/>
    </source>
</evidence>
<proteinExistence type="evidence at protein level"/>
<protein>
    <recommendedName>
        <fullName evidence="5 8">Terpene synthase 1</fullName>
        <shortName evidence="5 7">CsTPS1</shortName>
    </recommendedName>
    <alternativeName>
        <fullName evidence="5 6 7">Valencene synthase TPS1</fullName>
        <shortName evidence="7">CsVS</shortName>
        <ecNumber evidence="3 4">4.2.3.73</ecNumber>
    </alternativeName>
</protein>
<gene>
    <name evidence="5 8" type="primary">TPS1</name>
    <name evidence="7" type="synonym">CSVS</name>
    <name evidence="10" type="ORF">CISIN_1g045533mg</name>
</gene>
<sequence>MSSGETFRPTADFHPSLWRNHFLKGASDFKTVDHTATQERHEALKEEVRRMITDAEDKPVQKLRLIDEVQRLGVAYHFEKEIEDAIQKLCPIYIDSNRADLHTVSLHFRLLRQQGIKISCDVFEKFKDDEGRFKSSLINDVQGMLSLYEAAYMAVRGEHILDEAIAFTTTHLKSLVAQDHVTPKLAEQINHALYRPLRKTLPRLEARYFMSMINSTSDHLYNKTLLNFAKLDFNILLELHKEELNELTKWWKDLDFTTKLPYARDRLVELYFWDLGTYFEPQYAFGRKIMTQLNYILSIIDDTYDAYGTLEELSLFTEAVQRWNIEAVDMLPEYMKLIYRTLLDAFNEIEEDMAKQGRSHCVRYAKEENQKVIGAYSVQAKWFSEGYVPTIEEYMPIALTSCAYTFVITNSFLGMGDFATKEVFEWISNNPKVVKAASVICRLMDDMQGHEFEQKRGHVASAIECYTKQHGVSKEEAIKMFEEEVANAWKDINEELMMKPTVVARPLLGTILNLARAIDFIYKEDDGYTHSYLIKDQIASVLGDHVPF</sequence>
<feature type="chain" id="PRO_0000454681" description="Terpene synthase 1">
    <location>
        <begin position="1"/>
        <end position="548"/>
    </location>
</feature>
<feature type="short sequence motif" description="DDXXD motif" evidence="1">
    <location>
        <begin position="301"/>
        <end position="305"/>
    </location>
</feature>
<feature type="binding site" evidence="2">
    <location>
        <position position="301"/>
    </location>
    <ligand>
        <name>Mg(2+)</name>
        <dbReference type="ChEBI" id="CHEBI:18420"/>
        <label>1</label>
    </ligand>
</feature>
<feature type="binding site" evidence="2">
    <location>
        <position position="301"/>
    </location>
    <ligand>
        <name>Mg(2+)</name>
        <dbReference type="ChEBI" id="CHEBI:18420"/>
        <label>2</label>
    </ligand>
</feature>
<feature type="binding site" evidence="2">
    <location>
        <position position="305"/>
    </location>
    <ligand>
        <name>Mg(2+)</name>
        <dbReference type="ChEBI" id="CHEBI:18420"/>
        <label>1</label>
    </ligand>
</feature>
<feature type="binding site" evidence="2">
    <location>
        <position position="305"/>
    </location>
    <ligand>
        <name>Mg(2+)</name>
        <dbReference type="ChEBI" id="CHEBI:18420"/>
        <label>2</label>
    </ligand>
</feature>
<feature type="binding site" evidence="2">
    <location>
        <position position="445"/>
    </location>
    <ligand>
        <name>Mg(2+)</name>
        <dbReference type="ChEBI" id="CHEBI:18420"/>
        <label>3</label>
    </ligand>
</feature>
<feature type="binding site" evidence="2">
    <location>
        <position position="453"/>
    </location>
    <ligand>
        <name>Mg(2+)</name>
        <dbReference type="ChEBI" id="CHEBI:18420"/>
        <label>3</label>
    </ligand>
</feature>
<feature type="sequence conflict" description="In Ref. 1; AAQ04608." evidence="9" ref="1">
    <original>E</original>
    <variation>G</variation>
    <location>
        <position position="83"/>
    </location>
</feature>
<feature type="sequence conflict" description="In Ref. 1; AAQ04608." evidence="9" ref="1">
    <original>Y</original>
    <variation>C</variation>
    <location>
        <position position="221"/>
    </location>
</feature>
<feature type="sequence conflict" description="In Ref. 3; KDO49808." evidence="9" ref="3">
    <original>Y</original>
    <variation>H</variation>
    <location>
        <position position="221"/>
    </location>
</feature>
<organism>
    <name type="scientific">Citrus sinensis</name>
    <name type="common">Sweet orange</name>
    <name type="synonym">Citrus aurantium var. sinensis</name>
    <dbReference type="NCBI Taxonomy" id="2711"/>
    <lineage>
        <taxon>Eukaryota</taxon>
        <taxon>Viridiplantae</taxon>
        <taxon>Streptophyta</taxon>
        <taxon>Embryophyta</taxon>
        <taxon>Tracheophyta</taxon>
        <taxon>Spermatophyta</taxon>
        <taxon>Magnoliopsida</taxon>
        <taxon>eudicotyledons</taxon>
        <taxon>Gunneridae</taxon>
        <taxon>Pentapetalae</taxon>
        <taxon>rosids</taxon>
        <taxon>malvids</taxon>
        <taxon>Sapindales</taxon>
        <taxon>Rutaceae</taxon>
        <taxon>Aurantioideae</taxon>
        <taxon>Citrus</taxon>
    </lineage>
</organism>